<gene>
    <name evidence="6" type="primary">Fam83a</name>
</gene>
<evidence type="ECO:0000250" key="1">
    <source>
        <dbReference type="UniProtKB" id="Q86UY5"/>
    </source>
</evidence>
<evidence type="ECO:0000256" key="2">
    <source>
        <dbReference type="SAM" id="MobiDB-lite"/>
    </source>
</evidence>
<evidence type="ECO:0000269" key="3">
    <source>
    </source>
</evidence>
<evidence type="ECO:0000303" key="4">
    <source>
    </source>
</evidence>
<evidence type="ECO:0000305" key="5"/>
<evidence type="ECO:0000312" key="6">
    <source>
        <dbReference type="MGI" id="MGI:2447773"/>
    </source>
</evidence>
<comment type="function">
    <text evidence="3">Involved in mitochondrial maintenance during adipogenesis. May be acting by playing a role in the maintenance of normal mitochondrial function.</text>
</comment>
<comment type="subunit">
    <text evidence="3">Directly interacts (via DUF1669) with casein kinase isoforms CSNK1A1, CSNK1A1L, CSNK1D and CSNK1E.</text>
</comment>
<comment type="subcellular location">
    <subcellularLocation>
        <location evidence="3">Cytoplasm</location>
    </subcellularLocation>
    <subcellularLocation>
        <location evidence="3">Mitochondrion</location>
    </subcellularLocation>
</comment>
<comment type="alternative products">
    <event type="alternative splicing"/>
    <isoform>
        <id>Q8K2P2-1</id>
        <name>1</name>
        <sequence type="displayed"/>
    </isoform>
    <isoform>
        <id>Q8K2P2-2</id>
        <name>2</name>
        <sequence type="described" ref="VSP_025192 VSP_025193"/>
    </isoform>
</comment>
<comment type="tissue specificity">
    <text evidence="3">Widely expressed, with relatively higher expression levels in adipose tissues, especially in epididymal and inguinal white adipose tissue (at protein level).</text>
</comment>
<comment type="developmental stage">
    <text evidence="3">Tends to be up-regulated during the adipogenic differentiation in 3T3-L1 cell line (at protein level).</text>
</comment>
<comment type="domain">
    <text evidence="1">All members of the FAM83 family of proteins share a conserved N-terminal DUF1669 (domain of unknown function 1669) domain of about 300 amino acids. This domain mediates the interaction with casein kinase 1 (CK1) isoforms. Therefore, it has been proposed to rename DUF1669 the polypeptide anchor of CK1 domain.</text>
</comment>
<comment type="PTM">
    <text evidence="1">May be phosphorylated upon EGFR activation.</text>
</comment>
<comment type="similarity">
    <text evidence="5">Belongs to the FAM83 family.</text>
</comment>
<reference key="1">
    <citation type="journal article" date="2009" name="PLoS Biol.">
        <title>Lineage-specific biology revealed by a finished genome assembly of the mouse.</title>
        <authorList>
            <person name="Church D.M."/>
            <person name="Goodstadt L."/>
            <person name="Hillier L.W."/>
            <person name="Zody M.C."/>
            <person name="Goldstein S."/>
            <person name="She X."/>
            <person name="Bult C.J."/>
            <person name="Agarwala R."/>
            <person name="Cherry J.L."/>
            <person name="DiCuccio M."/>
            <person name="Hlavina W."/>
            <person name="Kapustin Y."/>
            <person name="Meric P."/>
            <person name="Maglott D."/>
            <person name="Birtle Z."/>
            <person name="Marques A.C."/>
            <person name="Graves T."/>
            <person name="Zhou S."/>
            <person name="Teague B."/>
            <person name="Potamousis K."/>
            <person name="Churas C."/>
            <person name="Place M."/>
            <person name="Herschleb J."/>
            <person name="Runnheim R."/>
            <person name="Forrest D."/>
            <person name="Amos-Landgraf J."/>
            <person name="Schwartz D.C."/>
            <person name="Cheng Z."/>
            <person name="Lindblad-Toh K."/>
            <person name="Eichler E.E."/>
            <person name="Ponting C.P."/>
        </authorList>
    </citation>
    <scope>NUCLEOTIDE SEQUENCE [LARGE SCALE GENOMIC DNA]</scope>
    <source>
        <strain>C57BL/6J</strain>
    </source>
</reference>
<reference key="2">
    <citation type="journal article" date="2004" name="Genome Res.">
        <title>The status, quality, and expansion of the NIH full-length cDNA project: the Mammalian Gene Collection (MGC).</title>
        <authorList>
            <consortium name="The MGC Project Team"/>
        </authorList>
    </citation>
    <scope>NUCLEOTIDE SEQUENCE [LARGE SCALE MRNA] (ISOFORM 2)</scope>
    <source>
        <strain>FVB/N</strain>
        <tissue>Mammary tumor</tissue>
    </source>
</reference>
<reference key="3">
    <citation type="journal article" date="2022" name="J. Biol. Chem.">
        <title>Proto-oncogene FAM83A contributes to casein kinase 1-mediated mitochondrial maintenance and white adipocyte differentiation.</title>
        <authorList>
            <person name="Huang K."/>
            <person name="Jia Z."/>
            <person name="Li H."/>
            <person name="Peng Y."/>
            <person name="Chen X."/>
            <person name="Luo N."/>
            <person name="Song T."/>
            <person name="Wang Y."/>
            <person name="Shi X."/>
            <person name="Kuang S."/>
            <person name="Yang G."/>
        </authorList>
    </citation>
    <scope>FUNCTION</scope>
    <scope>SUBCELLULAR LOCATION</scope>
    <scope>TISSUE SPECIFICITY</scope>
    <scope>DEVELOPMENTAL STAGE</scope>
    <scope>INTERACTION WITH CSNK1A1</scope>
</reference>
<keyword id="KW-0025">Alternative splicing</keyword>
<keyword id="KW-0963">Cytoplasm</keyword>
<keyword id="KW-0496">Mitochondrion</keyword>
<keyword id="KW-0597">Phosphoprotein</keyword>
<keyword id="KW-0656">Proto-oncogene</keyword>
<keyword id="KW-1185">Reference proteome</keyword>
<feature type="chain" id="PRO_0000286814" description="Protein FAM83A">
    <location>
        <begin position="1"/>
        <end position="436"/>
    </location>
</feature>
<feature type="region of interest" description="DUF1669" evidence="1">
    <location>
        <begin position="1"/>
        <end position="298"/>
    </location>
</feature>
<feature type="region of interest" description="Disordered" evidence="2">
    <location>
        <begin position="73"/>
        <end position="95"/>
    </location>
</feature>
<feature type="region of interest" description="Disordered" evidence="2">
    <location>
        <begin position="302"/>
        <end position="371"/>
    </location>
</feature>
<feature type="compositionally biased region" description="Polar residues" evidence="2">
    <location>
        <begin position="321"/>
        <end position="349"/>
    </location>
</feature>
<feature type="compositionally biased region" description="Low complexity" evidence="2">
    <location>
        <begin position="350"/>
        <end position="359"/>
    </location>
</feature>
<feature type="modified residue" description="Phosphoserine" evidence="1">
    <location>
        <position position="301"/>
    </location>
</feature>
<feature type="modified residue" description="Phosphoserine" evidence="1">
    <location>
        <position position="329"/>
    </location>
</feature>
<feature type="modified residue" description="Phosphoserine" evidence="1">
    <location>
        <position position="350"/>
    </location>
</feature>
<feature type="modified residue" description="Phosphoserine" evidence="1">
    <location>
        <position position="359"/>
    </location>
</feature>
<feature type="splice variant" id="VSP_025192" description="In isoform 2." evidence="4">
    <original>S</original>
    <variation>R</variation>
    <location>
        <position position="258"/>
    </location>
</feature>
<feature type="splice variant" id="VSP_025193" description="In isoform 2." evidence="4">
    <location>
        <begin position="259"/>
        <end position="436"/>
    </location>
</feature>
<feature type="sequence conflict" description="In Ref. 2; AAH30396." evidence="5" ref="2">
    <original>G</original>
    <variation>A</variation>
    <location>
        <position position="196"/>
    </location>
</feature>
<dbReference type="EMBL" id="AC107760">
    <property type="status" value="NOT_ANNOTATED_CDS"/>
    <property type="molecule type" value="Genomic_DNA"/>
</dbReference>
<dbReference type="EMBL" id="BC030396">
    <property type="protein sequence ID" value="AAH30396.1"/>
    <property type="molecule type" value="mRNA"/>
</dbReference>
<dbReference type="CCDS" id="CCDS27486.2">
    <molecule id="Q8K2P2-1"/>
</dbReference>
<dbReference type="RefSeq" id="NP_776287.2">
    <molecule id="Q8K2P2-1"/>
    <property type="nucleotide sequence ID" value="NM_173862.2"/>
</dbReference>
<dbReference type="SMR" id="Q8K2P2"/>
<dbReference type="FunCoup" id="Q8K2P2">
    <property type="interactions" value="2"/>
</dbReference>
<dbReference type="STRING" id="10090.ENSMUSP00000125464"/>
<dbReference type="GlyGen" id="Q8K2P2">
    <property type="glycosylation" value="1 site"/>
</dbReference>
<dbReference type="iPTMnet" id="Q8K2P2"/>
<dbReference type="PhosphoSitePlus" id="Q8K2P2"/>
<dbReference type="PaxDb" id="10090-ENSMUSP00000125464"/>
<dbReference type="ProteomicsDB" id="266830">
    <molecule id="Q8K2P2-1"/>
</dbReference>
<dbReference type="ProteomicsDB" id="266831">
    <molecule id="Q8K2P2-2"/>
</dbReference>
<dbReference type="Antibodypedia" id="64700">
    <property type="antibodies" value="76 antibodies from 18 providers"/>
</dbReference>
<dbReference type="Ensembl" id="ENSMUST00000050374.3">
    <molecule id="Q8K2P2-2"/>
    <property type="protein sequence ID" value="ENSMUSP00000050051.3"/>
    <property type="gene ID" value="ENSMUSG00000051225.10"/>
</dbReference>
<dbReference type="Ensembl" id="ENSMUST00000160942.8">
    <molecule id="Q8K2P2-1"/>
    <property type="protein sequence ID" value="ENSMUSP00000125464.2"/>
    <property type="gene ID" value="ENSMUSG00000051225.10"/>
</dbReference>
<dbReference type="GeneID" id="239463"/>
<dbReference type="KEGG" id="mmu:239463"/>
<dbReference type="UCSC" id="uc007vsz.2">
    <molecule id="Q8K2P2-2"/>
    <property type="organism name" value="mouse"/>
</dbReference>
<dbReference type="UCSC" id="uc011zta.1">
    <molecule id="Q8K2P2-1"/>
    <property type="organism name" value="mouse"/>
</dbReference>
<dbReference type="AGR" id="MGI:2447773"/>
<dbReference type="CTD" id="84985"/>
<dbReference type="MGI" id="MGI:2447773">
    <property type="gene designation" value="Fam83a"/>
</dbReference>
<dbReference type="VEuPathDB" id="HostDB:ENSMUSG00000051225"/>
<dbReference type="eggNOG" id="ENOG502QQDU">
    <property type="taxonomic scope" value="Eukaryota"/>
</dbReference>
<dbReference type="GeneTree" id="ENSGT00940000160768"/>
<dbReference type="HOGENOM" id="CLU_019056_3_1_1"/>
<dbReference type="InParanoid" id="Q8K2P2"/>
<dbReference type="OMA" id="YSFSWLC"/>
<dbReference type="OrthoDB" id="9905385at2759"/>
<dbReference type="PhylomeDB" id="Q8K2P2"/>
<dbReference type="TreeFam" id="TF330777"/>
<dbReference type="Reactome" id="R-MMU-177929">
    <property type="pathway name" value="Signaling by EGFR"/>
</dbReference>
<dbReference type="BioGRID-ORCS" id="239463">
    <property type="hits" value="2 hits in 78 CRISPR screens"/>
</dbReference>
<dbReference type="ChiTaRS" id="Fam83a">
    <property type="organism name" value="mouse"/>
</dbReference>
<dbReference type="PRO" id="PR:Q8K2P2"/>
<dbReference type="Proteomes" id="UP000000589">
    <property type="component" value="Chromosome 15"/>
</dbReference>
<dbReference type="RNAct" id="Q8K2P2">
    <property type="molecule type" value="protein"/>
</dbReference>
<dbReference type="Bgee" id="ENSMUSG00000051225">
    <property type="expression patterns" value="Expressed in white adipose tissue and 33 other cell types or tissues"/>
</dbReference>
<dbReference type="GO" id="GO:0005737">
    <property type="term" value="C:cytoplasm"/>
    <property type="evidence" value="ECO:0000314"/>
    <property type="project" value="UniProtKB"/>
</dbReference>
<dbReference type="GO" id="GO:0005739">
    <property type="term" value="C:mitochondrion"/>
    <property type="evidence" value="ECO:0000314"/>
    <property type="project" value="UniProtKB"/>
</dbReference>
<dbReference type="GO" id="GO:0042802">
    <property type="term" value="F:identical protein binding"/>
    <property type="evidence" value="ECO:0007669"/>
    <property type="project" value="Ensembl"/>
</dbReference>
<dbReference type="GO" id="GO:0036312">
    <property type="term" value="F:phosphatidylinositol 3-kinase regulatory subunit binding"/>
    <property type="evidence" value="ECO:0007669"/>
    <property type="project" value="Ensembl"/>
</dbReference>
<dbReference type="GO" id="GO:0019901">
    <property type="term" value="F:protein kinase binding"/>
    <property type="evidence" value="ECO:0000250"/>
    <property type="project" value="UniProtKB"/>
</dbReference>
<dbReference type="GO" id="GO:0008283">
    <property type="term" value="P:cell population proliferation"/>
    <property type="evidence" value="ECO:0000250"/>
    <property type="project" value="UniProtKB"/>
</dbReference>
<dbReference type="GO" id="GO:0007173">
    <property type="term" value="P:epidermal growth factor receptor signaling pathway"/>
    <property type="evidence" value="ECO:0000250"/>
    <property type="project" value="UniProtKB"/>
</dbReference>
<dbReference type="GO" id="GO:1904179">
    <property type="term" value="P:positive regulation of adipose tissue development"/>
    <property type="evidence" value="ECO:0000315"/>
    <property type="project" value="UniProtKB"/>
</dbReference>
<dbReference type="GO" id="GO:0050872">
    <property type="term" value="P:white fat cell differentiation"/>
    <property type="evidence" value="ECO:0000315"/>
    <property type="project" value="UniProtKB"/>
</dbReference>
<dbReference type="CDD" id="cd09181">
    <property type="entry name" value="PLDc_FAM83A_N"/>
    <property type="match status" value="1"/>
</dbReference>
<dbReference type="FunFam" id="3.30.870.10:FF:000004">
    <property type="entry name" value="protein FAM83H isoform X2"/>
    <property type="match status" value="1"/>
</dbReference>
<dbReference type="Gene3D" id="3.30.870.10">
    <property type="entry name" value="Endonuclease Chain A"/>
    <property type="match status" value="1"/>
</dbReference>
<dbReference type="InterPro" id="IPR050944">
    <property type="entry name" value="FAM83"/>
</dbReference>
<dbReference type="InterPro" id="IPR012461">
    <property type="entry name" value="SACK1"/>
</dbReference>
<dbReference type="PANTHER" id="PTHR16181">
    <property type="entry name" value="PROTEIN FAM83A-RELATED"/>
    <property type="match status" value="1"/>
</dbReference>
<dbReference type="PANTHER" id="PTHR16181:SF29">
    <property type="entry name" value="PROTEIN FAM83A-RELATED"/>
    <property type="match status" value="1"/>
</dbReference>
<dbReference type="Pfam" id="PF07894">
    <property type="entry name" value="SACK1"/>
    <property type="match status" value="1"/>
</dbReference>
<dbReference type="SUPFAM" id="SSF56024">
    <property type="entry name" value="Phospholipase D/nuclease"/>
    <property type="match status" value="1"/>
</dbReference>
<sequence>MSRSRHVGKIRKRLEDVKNQWTRPARADFSDNESARLATDALLDGGPEAYWRALSQEGEVDFLSSAEAQYIQAQAKEPPDAPDSAGGAESGPRGLDSCSLQSGTYFPVASEGSEPALLHTWTLAEKPYLKEKSSATIYFQMDKHNNIRDLVRRCISRASQVLAILMDVFTDVEILCDILEAANKRGVFVCVLLDQGGVKLFQEMCDKVQISDIHLKNISIRSVEGEVYCAKSGRKFAGQIQEKFIISDWRFVLSGSYSFSWLCGHVHRNILSKFTGQAVELFDEEFRRLYASSKPLMGLKSPRLVAPFQPNKGPEAPNGRLSGTSDSASDRTSSNPFSSLSTGSNAHNQSLSTSSGPSSPLAPIPPTVPRLQPYHSTRRAVAPQPLLVPMRPHEGAPAPYSSLMAYRPTRLQLQQLGLVPRVTHPWRPFLQALPHF</sequence>
<accession>Q8K2P2</accession>
<protein>
    <recommendedName>
        <fullName evidence="5">Protein FAM83A</fullName>
    </recommendedName>
</protein>
<name>FA83A_MOUSE</name>
<proteinExistence type="evidence at protein level"/>
<organism>
    <name type="scientific">Mus musculus</name>
    <name type="common">Mouse</name>
    <dbReference type="NCBI Taxonomy" id="10090"/>
    <lineage>
        <taxon>Eukaryota</taxon>
        <taxon>Metazoa</taxon>
        <taxon>Chordata</taxon>
        <taxon>Craniata</taxon>
        <taxon>Vertebrata</taxon>
        <taxon>Euteleostomi</taxon>
        <taxon>Mammalia</taxon>
        <taxon>Eutheria</taxon>
        <taxon>Euarchontoglires</taxon>
        <taxon>Glires</taxon>
        <taxon>Rodentia</taxon>
        <taxon>Myomorpha</taxon>
        <taxon>Muroidea</taxon>
        <taxon>Muridae</taxon>
        <taxon>Murinae</taxon>
        <taxon>Mus</taxon>
        <taxon>Mus</taxon>
    </lineage>
</organism>